<protein>
    <recommendedName>
        <fullName>Assembly factor cbp4</fullName>
    </recommendedName>
    <alternativeName>
        <fullName>Cytochrome b mRNA-processing protein 4</fullName>
    </alternativeName>
</protein>
<accession>Q5ASG4</accession>
<accession>C8V9X3</accession>
<gene>
    <name type="primary">cbp4</name>
    <name type="ORF">AN8766</name>
</gene>
<keyword id="KW-0143">Chaperone</keyword>
<keyword id="KW-0175">Coiled coil</keyword>
<keyword id="KW-0472">Membrane</keyword>
<keyword id="KW-0496">Mitochondrion</keyword>
<keyword id="KW-0999">Mitochondrion inner membrane</keyword>
<keyword id="KW-1185">Reference proteome</keyword>
<keyword id="KW-0812">Transmembrane</keyword>
<keyword id="KW-1133">Transmembrane helix</keyword>
<sequence length="116" mass="13630">MSRAGTWLKMLGVGIVICVGGPALVEKLRPTDAELIQRYNPELRERSMREGDRRAQEFDDYVTKLKEWSKSDKSIWFAAKEMEEKRLAEQQAIQNQTKEQARIQREEMRKELMGEK</sequence>
<organism>
    <name type="scientific">Emericella nidulans (strain FGSC A4 / ATCC 38163 / CBS 112.46 / NRRL 194 / M139)</name>
    <name type="common">Aspergillus nidulans</name>
    <dbReference type="NCBI Taxonomy" id="227321"/>
    <lineage>
        <taxon>Eukaryota</taxon>
        <taxon>Fungi</taxon>
        <taxon>Dikarya</taxon>
        <taxon>Ascomycota</taxon>
        <taxon>Pezizomycotina</taxon>
        <taxon>Eurotiomycetes</taxon>
        <taxon>Eurotiomycetidae</taxon>
        <taxon>Eurotiales</taxon>
        <taxon>Aspergillaceae</taxon>
        <taxon>Aspergillus</taxon>
        <taxon>Aspergillus subgen. Nidulantes</taxon>
    </lineage>
</organism>
<evidence type="ECO:0000250" key="1"/>
<evidence type="ECO:0000255" key="2"/>
<evidence type="ECO:0000256" key="3">
    <source>
        <dbReference type="SAM" id="MobiDB-lite"/>
    </source>
</evidence>
<evidence type="ECO:0000305" key="4"/>
<proteinExistence type="inferred from homology"/>
<comment type="function">
    <text evidence="1">Essential for the assembly of ubiquinol-cytochrome c reductase. It has a direct effect on the correct occurrence of the Rieske protein, core 4, core 5 and apocytochrome b (By similarity).</text>
</comment>
<comment type="subcellular location">
    <subcellularLocation>
        <location evidence="1">Mitochondrion inner membrane</location>
        <topology evidence="1">Single-pass membrane protein</topology>
    </subcellularLocation>
</comment>
<comment type="similarity">
    <text evidence="4">Belongs to the CBP4 family.</text>
</comment>
<name>CBP4_EMENI</name>
<feature type="chain" id="PRO_0000330128" description="Assembly factor cbp4">
    <location>
        <begin position="1"/>
        <end position="116"/>
    </location>
</feature>
<feature type="transmembrane region" description="Helical" evidence="2">
    <location>
        <begin position="7"/>
        <end position="25"/>
    </location>
</feature>
<feature type="region of interest" description="Disordered" evidence="3">
    <location>
        <begin position="90"/>
        <end position="116"/>
    </location>
</feature>
<feature type="coiled-coil region" evidence="2">
    <location>
        <begin position="77"/>
        <end position="116"/>
    </location>
</feature>
<feature type="compositionally biased region" description="Basic and acidic residues" evidence="3">
    <location>
        <begin position="99"/>
        <end position="116"/>
    </location>
</feature>
<dbReference type="EMBL" id="AACD01000161">
    <property type="protein sequence ID" value="EAA60559.1"/>
    <property type="molecule type" value="Genomic_DNA"/>
</dbReference>
<dbReference type="EMBL" id="BN001303">
    <property type="protein sequence ID" value="CBF78069.1"/>
    <property type="molecule type" value="Genomic_DNA"/>
</dbReference>
<dbReference type="RefSeq" id="XP_682035.1">
    <property type="nucleotide sequence ID" value="XM_676943.1"/>
</dbReference>
<dbReference type="FunCoup" id="Q5ASG4">
    <property type="interactions" value="38"/>
</dbReference>
<dbReference type="EnsemblFungi" id="CBF78069">
    <property type="protein sequence ID" value="CBF78069"/>
    <property type="gene ID" value="ANIA_08766"/>
</dbReference>
<dbReference type="KEGG" id="ani:ANIA_08766"/>
<dbReference type="VEuPathDB" id="FungiDB:AN8766"/>
<dbReference type="eggNOG" id="ENOG502S2G8">
    <property type="taxonomic scope" value="Eukaryota"/>
</dbReference>
<dbReference type="HOGENOM" id="CLU_136894_0_0_1"/>
<dbReference type="InParanoid" id="Q5ASG4"/>
<dbReference type="OMA" id="DKPIWVV"/>
<dbReference type="OrthoDB" id="5576752at2759"/>
<dbReference type="Proteomes" id="UP000000560">
    <property type="component" value="Chromosome III"/>
</dbReference>
<dbReference type="GO" id="GO:0005743">
    <property type="term" value="C:mitochondrial inner membrane"/>
    <property type="evidence" value="ECO:0007669"/>
    <property type="project" value="UniProtKB-SubCell"/>
</dbReference>
<dbReference type="GO" id="GO:0031966">
    <property type="term" value="C:mitochondrial membrane"/>
    <property type="evidence" value="ECO:0000318"/>
    <property type="project" value="GO_Central"/>
</dbReference>
<dbReference type="GO" id="GO:0034551">
    <property type="term" value="P:mitochondrial respiratory chain complex III assembly"/>
    <property type="evidence" value="ECO:0000318"/>
    <property type="project" value="GO_Central"/>
</dbReference>
<dbReference type="InterPro" id="IPR012420">
    <property type="entry name" value="Cbp4"/>
</dbReference>
<dbReference type="PANTHER" id="PTHR28202">
    <property type="entry name" value="ASSEMBLY FACTOR CBP4"/>
    <property type="match status" value="1"/>
</dbReference>
<dbReference type="PANTHER" id="PTHR28202:SF1">
    <property type="entry name" value="ASSEMBLY FACTOR CBP4"/>
    <property type="match status" value="1"/>
</dbReference>
<dbReference type="Pfam" id="PF07960">
    <property type="entry name" value="CBP4"/>
    <property type="match status" value="1"/>
</dbReference>
<reference key="1">
    <citation type="journal article" date="2005" name="Nature">
        <title>Sequencing of Aspergillus nidulans and comparative analysis with A. fumigatus and A. oryzae.</title>
        <authorList>
            <person name="Galagan J.E."/>
            <person name="Calvo S.E."/>
            <person name="Cuomo C."/>
            <person name="Ma L.-J."/>
            <person name="Wortman J.R."/>
            <person name="Batzoglou S."/>
            <person name="Lee S.-I."/>
            <person name="Bastuerkmen M."/>
            <person name="Spevak C.C."/>
            <person name="Clutterbuck J."/>
            <person name="Kapitonov V."/>
            <person name="Jurka J."/>
            <person name="Scazzocchio C."/>
            <person name="Farman M.L."/>
            <person name="Butler J."/>
            <person name="Purcell S."/>
            <person name="Harris S."/>
            <person name="Braus G.H."/>
            <person name="Draht O."/>
            <person name="Busch S."/>
            <person name="D'Enfert C."/>
            <person name="Bouchier C."/>
            <person name="Goldman G.H."/>
            <person name="Bell-Pedersen D."/>
            <person name="Griffiths-Jones S."/>
            <person name="Doonan J.H."/>
            <person name="Yu J."/>
            <person name="Vienken K."/>
            <person name="Pain A."/>
            <person name="Freitag M."/>
            <person name="Selker E.U."/>
            <person name="Archer D.B."/>
            <person name="Penalva M.A."/>
            <person name="Oakley B.R."/>
            <person name="Momany M."/>
            <person name="Tanaka T."/>
            <person name="Kumagai T."/>
            <person name="Asai K."/>
            <person name="Machida M."/>
            <person name="Nierman W.C."/>
            <person name="Denning D.W."/>
            <person name="Caddick M.X."/>
            <person name="Hynes M."/>
            <person name="Paoletti M."/>
            <person name="Fischer R."/>
            <person name="Miller B.L."/>
            <person name="Dyer P.S."/>
            <person name="Sachs M.S."/>
            <person name="Osmani S.A."/>
            <person name="Birren B.W."/>
        </authorList>
    </citation>
    <scope>NUCLEOTIDE SEQUENCE [LARGE SCALE GENOMIC DNA]</scope>
    <source>
        <strain>FGSC A4 / ATCC 38163 / CBS 112.46 / NRRL 194 / M139</strain>
    </source>
</reference>
<reference key="2">
    <citation type="journal article" date="2009" name="Fungal Genet. Biol.">
        <title>The 2008 update of the Aspergillus nidulans genome annotation: a community effort.</title>
        <authorList>
            <person name="Wortman J.R."/>
            <person name="Gilsenan J.M."/>
            <person name="Joardar V."/>
            <person name="Deegan J."/>
            <person name="Clutterbuck J."/>
            <person name="Andersen M.R."/>
            <person name="Archer D."/>
            <person name="Bencina M."/>
            <person name="Braus G."/>
            <person name="Coutinho P."/>
            <person name="von Dohren H."/>
            <person name="Doonan J."/>
            <person name="Driessen A.J."/>
            <person name="Durek P."/>
            <person name="Espeso E."/>
            <person name="Fekete E."/>
            <person name="Flipphi M."/>
            <person name="Estrada C.G."/>
            <person name="Geysens S."/>
            <person name="Goldman G."/>
            <person name="de Groot P.W."/>
            <person name="Hansen K."/>
            <person name="Harris S.D."/>
            <person name="Heinekamp T."/>
            <person name="Helmstaedt K."/>
            <person name="Henrissat B."/>
            <person name="Hofmann G."/>
            <person name="Homan T."/>
            <person name="Horio T."/>
            <person name="Horiuchi H."/>
            <person name="James S."/>
            <person name="Jones M."/>
            <person name="Karaffa L."/>
            <person name="Karanyi Z."/>
            <person name="Kato M."/>
            <person name="Keller N."/>
            <person name="Kelly D.E."/>
            <person name="Kiel J.A."/>
            <person name="Kim J.M."/>
            <person name="van der Klei I.J."/>
            <person name="Klis F.M."/>
            <person name="Kovalchuk A."/>
            <person name="Krasevec N."/>
            <person name="Kubicek C.P."/>
            <person name="Liu B."/>
            <person name="Maccabe A."/>
            <person name="Meyer V."/>
            <person name="Mirabito P."/>
            <person name="Miskei M."/>
            <person name="Mos M."/>
            <person name="Mullins J."/>
            <person name="Nelson D.R."/>
            <person name="Nielsen J."/>
            <person name="Oakley B.R."/>
            <person name="Osmani S.A."/>
            <person name="Pakula T."/>
            <person name="Paszewski A."/>
            <person name="Paulsen I."/>
            <person name="Pilsyk S."/>
            <person name="Pocsi I."/>
            <person name="Punt P.J."/>
            <person name="Ram A.F."/>
            <person name="Ren Q."/>
            <person name="Robellet X."/>
            <person name="Robson G."/>
            <person name="Seiboth B."/>
            <person name="van Solingen P."/>
            <person name="Specht T."/>
            <person name="Sun J."/>
            <person name="Taheri-Talesh N."/>
            <person name="Takeshita N."/>
            <person name="Ussery D."/>
            <person name="vanKuyk P.A."/>
            <person name="Visser H."/>
            <person name="van de Vondervoort P.J."/>
            <person name="de Vries R.P."/>
            <person name="Walton J."/>
            <person name="Xiang X."/>
            <person name="Xiong Y."/>
            <person name="Zeng A.P."/>
            <person name="Brandt B.W."/>
            <person name="Cornell M.J."/>
            <person name="van den Hondel C.A."/>
            <person name="Visser J."/>
            <person name="Oliver S.G."/>
            <person name="Turner G."/>
        </authorList>
    </citation>
    <scope>GENOME REANNOTATION</scope>
    <source>
        <strain>FGSC A4 / ATCC 38163 / CBS 112.46 / NRRL 194 / M139</strain>
    </source>
</reference>